<proteinExistence type="evidence at protein level"/>
<comment type="function">
    <text>Anchoring protein that mediates the subcellular compartmentation of protein kinase A (PKA) and protein kinase C (PKC).</text>
</comment>
<comment type="subunit">
    <text>Binds to dimeric RII-alpha regulatory subunit of PKC.</text>
</comment>
<comment type="interaction">
    <interactant intactId="EBI-2562430">
        <id>Q02952</id>
    </interactant>
    <interactant intactId="EBI-491549">
        <id>P35222</id>
        <label>CTNNB1</label>
    </interactant>
    <organismsDiffer>false</organismsDiffer>
    <experiments>2</experiments>
</comment>
<comment type="interaction">
    <interactant intactId="EBI-2562430">
        <id>Q02952</id>
    </interactant>
    <interactant intactId="EBI-297353">
        <id>P00533</id>
        <label>EGFR</label>
    </interactant>
    <organismsDiffer>false</organismsDiffer>
    <experiments>3</experiments>
</comment>
<comment type="interaction">
    <interactant intactId="EBI-2562430">
        <id>Q02952</id>
    </interactant>
    <interactant intactId="EBI-912547">
        <id>Q13642</id>
        <label>FHL1</label>
    </interactant>
    <organismsDiffer>false</organismsDiffer>
    <experiments>3</experiments>
</comment>
<comment type="interaction">
    <interactant intactId="EBI-2562430">
        <id>Q02952</id>
    </interactant>
    <interactant intactId="EBI-2556122">
        <id>P13861</id>
        <label>PRKAR2A</label>
    </interactant>
    <organismsDiffer>false</organismsDiffer>
    <experiments>2</experiments>
</comment>
<comment type="subcellular location">
    <subcellularLocation>
        <location evidence="15">Cytoplasm</location>
        <location evidence="15">Cell cortex</location>
    </subcellularLocation>
    <subcellularLocation>
        <location evidence="15">Cytoplasm</location>
        <location evidence="15">Cytoskeleton</location>
    </subcellularLocation>
    <subcellularLocation>
        <location evidence="15">Membrane</location>
        <topology evidence="15">Lipid-anchor</topology>
    </subcellularLocation>
    <text>May be part of the cortical cytoskeleton.</text>
</comment>
<comment type="alternative products">
    <event type="alternative splicing"/>
    <isoform>
        <id>Q02952-1</id>
        <name>1</name>
        <name>Alpha</name>
        <sequence type="displayed"/>
    </isoform>
    <isoform>
        <id>Q02952-2</id>
        <name>2</name>
        <name>Beta</name>
        <sequence type="described" ref="VSP_004110 VSP_004111"/>
    </isoform>
    <isoform>
        <id>Q02952-3</id>
        <name>3</name>
        <name>Gamma</name>
        <sequence type="described" ref="VSP_028133 VSP_028134"/>
    </isoform>
</comment>
<comment type="tissue specificity">
    <text>Expressed in endothelial cells, cultured fibroblasts and osteosarcoma, but not in platelets, leukocytes, monocytic cell lines or peripherical blood cells.</text>
</comment>
<comment type="induction">
    <text>Activated by lysophosphatidylcholine (lysoPC).</text>
</comment>
<comment type="domain">
    <text>Polybasic regions located between residues 266 and 557 are involved in binding PKC.</text>
</comment>
<comment type="miscellaneous">
    <text>Antibodies against the C-terminal of gravin can be produced by patients with myasthenia gravis (MG).</text>
</comment>
<comment type="sequence caution" evidence="15">
    <conflict type="erroneous initiation">
        <sequence resource="EMBL-CDS" id="BAE06085"/>
    </conflict>
    <text>Extended N-terminus.</text>
</comment>
<comment type="online information" name="Atlas of Genetics and Cytogenetics in Oncology and Haematology">
    <link uri="https://atlasgeneticsoncology.org/gene/607/AKAP12"/>
</comment>
<name>AKA12_HUMAN</name>
<organism>
    <name type="scientific">Homo sapiens</name>
    <name type="common">Human</name>
    <dbReference type="NCBI Taxonomy" id="9606"/>
    <lineage>
        <taxon>Eukaryota</taxon>
        <taxon>Metazoa</taxon>
        <taxon>Chordata</taxon>
        <taxon>Craniata</taxon>
        <taxon>Vertebrata</taxon>
        <taxon>Euteleostomi</taxon>
        <taxon>Mammalia</taxon>
        <taxon>Eutheria</taxon>
        <taxon>Euarchontoglires</taxon>
        <taxon>Primates</taxon>
        <taxon>Haplorrhini</taxon>
        <taxon>Catarrhini</taxon>
        <taxon>Hominidae</taxon>
        <taxon>Homo</taxon>
    </lineage>
</organism>
<dbReference type="EMBL" id="U81607">
    <property type="protein sequence ID" value="AAC51366.1"/>
    <property type="molecule type" value="mRNA"/>
</dbReference>
<dbReference type="EMBL" id="AB003476">
    <property type="protein sequence ID" value="BAA19927.1"/>
    <property type="molecule type" value="mRNA"/>
</dbReference>
<dbReference type="EMBL" id="AB210003">
    <property type="protein sequence ID" value="BAE06085.1"/>
    <property type="status" value="ALT_INIT"/>
    <property type="molecule type" value="mRNA"/>
</dbReference>
<dbReference type="EMBL" id="CR749527">
    <property type="protein sequence ID" value="CAH18338.1"/>
    <property type="molecule type" value="mRNA"/>
</dbReference>
<dbReference type="EMBL" id="AL590413">
    <property type="status" value="NOT_ANNOTATED_CDS"/>
    <property type="molecule type" value="Genomic_DNA"/>
</dbReference>
<dbReference type="EMBL" id="AL356535">
    <property type="status" value="NOT_ANNOTATED_CDS"/>
    <property type="molecule type" value="Genomic_DNA"/>
</dbReference>
<dbReference type="EMBL" id="AL033392">
    <property type="status" value="NOT_ANNOTATED_CDS"/>
    <property type="molecule type" value="Genomic_DNA"/>
</dbReference>
<dbReference type="EMBL" id="AF001504">
    <property type="protein sequence ID" value="AAB58938.1"/>
    <property type="molecule type" value="mRNA"/>
</dbReference>
<dbReference type="EMBL" id="M96322">
    <property type="protein sequence ID" value="AAA35931.1"/>
    <property type="molecule type" value="mRNA"/>
</dbReference>
<dbReference type="CCDS" id="CCDS5229.1">
    <molecule id="Q02952-1"/>
</dbReference>
<dbReference type="CCDS" id="CCDS5230.1">
    <molecule id="Q02952-2"/>
</dbReference>
<dbReference type="CCDS" id="CCDS94020.1">
    <molecule id="Q02952-3"/>
</dbReference>
<dbReference type="PIR" id="A43922">
    <property type="entry name" value="A43922"/>
</dbReference>
<dbReference type="PIR" id="JW0057">
    <property type="entry name" value="JW0057"/>
</dbReference>
<dbReference type="RefSeq" id="NP_001357275.1">
    <molecule id="Q02952-3"/>
    <property type="nucleotide sequence ID" value="NM_001370346.1"/>
</dbReference>
<dbReference type="RefSeq" id="NP_005091.2">
    <molecule id="Q02952-1"/>
    <property type="nucleotide sequence ID" value="NM_005100.3"/>
</dbReference>
<dbReference type="RefSeq" id="NP_653080.1">
    <molecule id="Q02952-2"/>
    <property type="nucleotide sequence ID" value="NM_144497.2"/>
</dbReference>
<dbReference type="RefSeq" id="XP_005267292.1">
    <property type="nucleotide sequence ID" value="XM_005267235.2"/>
</dbReference>
<dbReference type="RefSeq" id="XP_016867006.1">
    <molecule id="Q02952-1"/>
    <property type="nucleotide sequence ID" value="XM_017011517.3"/>
</dbReference>
<dbReference type="SMR" id="Q02952"/>
<dbReference type="BioGRID" id="114958">
    <property type="interactions" value="172"/>
</dbReference>
<dbReference type="CORUM" id="Q02952"/>
<dbReference type="FunCoup" id="Q02952">
    <property type="interactions" value="1065"/>
</dbReference>
<dbReference type="IntAct" id="Q02952">
    <property type="interactions" value="76"/>
</dbReference>
<dbReference type="MINT" id="Q02952"/>
<dbReference type="STRING" id="9606.ENSP00000384537"/>
<dbReference type="ChEMBL" id="CHEMBL4295800"/>
<dbReference type="GlyGen" id="Q02952">
    <property type="glycosylation" value="6 sites, 1 O-linked glycan (4 sites)"/>
</dbReference>
<dbReference type="iPTMnet" id="Q02952"/>
<dbReference type="MetOSite" id="Q02952"/>
<dbReference type="PhosphoSitePlus" id="Q02952"/>
<dbReference type="SwissPalm" id="Q02952"/>
<dbReference type="BioMuta" id="AKAP12"/>
<dbReference type="DMDM" id="317373554"/>
<dbReference type="jPOST" id="Q02952"/>
<dbReference type="MassIVE" id="Q02952"/>
<dbReference type="PaxDb" id="9606-ENSP00000384537"/>
<dbReference type="PeptideAtlas" id="Q02952"/>
<dbReference type="ProteomicsDB" id="58141">
    <molecule id="Q02952-1"/>
</dbReference>
<dbReference type="ProteomicsDB" id="58142">
    <molecule id="Q02952-2"/>
</dbReference>
<dbReference type="ProteomicsDB" id="58143">
    <molecule id="Q02952-3"/>
</dbReference>
<dbReference type="Pumba" id="Q02952"/>
<dbReference type="Antibodypedia" id="1199">
    <property type="antibodies" value="236 antibodies from 37 providers"/>
</dbReference>
<dbReference type="DNASU" id="9590"/>
<dbReference type="Ensembl" id="ENST00000253332.5">
    <molecule id="Q02952-1"/>
    <property type="protein sequence ID" value="ENSP00000253332.1"/>
    <property type="gene ID" value="ENSG00000131016.17"/>
</dbReference>
<dbReference type="Ensembl" id="ENST00000354675.10">
    <molecule id="Q02952-2"/>
    <property type="protein sequence ID" value="ENSP00000346702.6"/>
    <property type="gene ID" value="ENSG00000131016.17"/>
</dbReference>
<dbReference type="Ensembl" id="ENST00000359755.5">
    <molecule id="Q02952-3"/>
    <property type="protein sequence ID" value="ENSP00000352794.5"/>
    <property type="gene ID" value="ENSG00000131016.17"/>
</dbReference>
<dbReference type="Ensembl" id="ENST00000402676.7">
    <molecule id="Q02952-1"/>
    <property type="protein sequence ID" value="ENSP00000384537.2"/>
    <property type="gene ID" value="ENSG00000131016.17"/>
</dbReference>
<dbReference type="GeneID" id="9590"/>
<dbReference type="KEGG" id="hsa:9590"/>
<dbReference type="MANE-Select" id="ENST00000402676.7">
    <property type="protein sequence ID" value="ENSP00000384537.2"/>
    <property type="RefSeq nucleotide sequence ID" value="NM_005100.4"/>
    <property type="RefSeq protein sequence ID" value="NP_005091.2"/>
</dbReference>
<dbReference type="UCSC" id="uc003qoe.5">
    <molecule id="Q02952-1"/>
    <property type="organism name" value="human"/>
</dbReference>
<dbReference type="AGR" id="HGNC:370"/>
<dbReference type="CTD" id="9590"/>
<dbReference type="DisGeNET" id="9590"/>
<dbReference type="GeneCards" id="AKAP12"/>
<dbReference type="HGNC" id="HGNC:370">
    <property type="gene designation" value="AKAP12"/>
</dbReference>
<dbReference type="HPA" id="ENSG00000131016">
    <property type="expression patterns" value="Low tissue specificity"/>
</dbReference>
<dbReference type="MIM" id="604698">
    <property type="type" value="gene"/>
</dbReference>
<dbReference type="neXtProt" id="NX_Q02952"/>
<dbReference type="OpenTargets" id="ENSG00000131016"/>
<dbReference type="PharmGKB" id="PA24664"/>
<dbReference type="VEuPathDB" id="HostDB:ENSG00000131016"/>
<dbReference type="eggNOG" id="ENOG502RDV6">
    <property type="taxonomic scope" value="Eukaryota"/>
</dbReference>
<dbReference type="GeneTree" id="ENSGT00730000111244"/>
<dbReference type="HOGENOM" id="CLU_002691_0_0_1"/>
<dbReference type="InParanoid" id="Q02952"/>
<dbReference type="OMA" id="SFTEPAW"/>
<dbReference type="OrthoDB" id="8931760at2759"/>
<dbReference type="PAN-GO" id="Q02952">
    <property type="GO annotations" value="3 GO annotations based on evolutionary models"/>
</dbReference>
<dbReference type="PhylomeDB" id="Q02952"/>
<dbReference type="TreeFam" id="TF105411"/>
<dbReference type="PathwayCommons" id="Q02952"/>
<dbReference type="Reactome" id="R-HSA-9013405">
    <property type="pathway name" value="RHOD GTPase cycle"/>
</dbReference>
<dbReference type="Reactome" id="R-HSA-9035034">
    <property type="pathway name" value="RHOF GTPase cycle"/>
</dbReference>
<dbReference type="SignaLink" id="Q02952"/>
<dbReference type="SIGNOR" id="Q02952"/>
<dbReference type="BioGRID-ORCS" id="9590">
    <property type="hits" value="21 hits in 1161 CRISPR screens"/>
</dbReference>
<dbReference type="CD-CODE" id="DEE660B4">
    <property type="entry name" value="Stress granule"/>
</dbReference>
<dbReference type="CD-CODE" id="FB4E32DD">
    <property type="entry name" value="Presynaptic clusters and postsynaptic densities"/>
</dbReference>
<dbReference type="ChiTaRS" id="AKAP12">
    <property type="organism name" value="human"/>
</dbReference>
<dbReference type="GeneWiki" id="AKAP12"/>
<dbReference type="GenomeRNAi" id="9590"/>
<dbReference type="Pharos" id="Q02952">
    <property type="development level" value="Tbio"/>
</dbReference>
<dbReference type="PRO" id="PR:Q02952"/>
<dbReference type="Proteomes" id="UP000005640">
    <property type="component" value="Chromosome 6"/>
</dbReference>
<dbReference type="RNAct" id="Q02952">
    <property type="molecule type" value="protein"/>
</dbReference>
<dbReference type="Bgee" id="ENSG00000131016">
    <property type="expression patterns" value="Expressed in pons and 207 other cell types or tissues"/>
</dbReference>
<dbReference type="GO" id="GO:0005938">
    <property type="term" value="C:cell cortex"/>
    <property type="evidence" value="ECO:0007669"/>
    <property type="project" value="UniProtKB-SubCell"/>
</dbReference>
<dbReference type="GO" id="GO:0005737">
    <property type="term" value="C:cytoplasm"/>
    <property type="evidence" value="ECO:0000318"/>
    <property type="project" value="GO_Central"/>
</dbReference>
<dbReference type="GO" id="GO:0005856">
    <property type="term" value="C:cytoskeleton"/>
    <property type="evidence" value="ECO:0007669"/>
    <property type="project" value="UniProtKB-SubCell"/>
</dbReference>
<dbReference type="GO" id="GO:0005829">
    <property type="term" value="C:cytosol"/>
    <property type="evidence" value="ECO:0000314"/>
    <property type="project" value="HPA"/>
</dbReference>
<dbReference type="GO" id="GO:0005925">
    <property type="term" value="C:focal adhesion"/>
    <property type="evidence" value="ECO:0007005"/>
    <property type="project" value="UniProtKB"/>
</dbReference>
<dbReference type="GO" id="GO:0043025">
    <property type="term" value="C:neuronal cell body"/>
    <property type="evidence" value="ECO:0007669"/>
    <property type="project" value="Ensembl"/>
</dbReference>
<dbReference type="GO" id="GO:0005886">
    <property type="term" value="C:plasma membrane"/>
    <property type="evidence" value="ECO:0000314"/>
    <property type="project" value="HPA"/>
</dbReference>
<dbReference type="GO" id="GO:0098685">
    <property type="term" value="C:Schaffer collateral - CA1 synapse"/>
    <property type="evidence" value="ECO:0007669"/>
    <property type="project" value="Ensembl"/>
</dbReference>
<dbReference type="GO" id="GO:0008179">
    <property type="term" value="F:adenylate cyclase binding"/>
    <property type="evidence" value="ECO:0000353"/>
    <property type="project" value="UniProtKB"/>
</dbReference>
<dbReference type="GO" id="GO:0005516">
    <property type="term" value="F:calmodulin binding"/>
    <property type="evidence" value="ECO:0007669"/>
    <property type="project" value="UniProtKB-KW"/>
</dbReference>
<dbReference type="GO" id="GO:0051018">
    <property type="term" value="F:protein kinase A binding"/>
    <property type="evidence" value="ECO:0000304"/>
    <property type="project" value="ProtInc"/>
</dbReference>
<dbReference type="GO" id="GO:0007193">
    <property type="term" value="P:adenylate cyclase-inhibiting G protein-coupled receptor signaling pathway"/>
    <property type="evidence" value="ECO:0000315"/>
    <property type="project" value="UniProtKB"/>
</dbReference>
<dbReference type="GO" id="GO:0071347">
    <property type="term" value="P:cellular response to interleukin-1"/>
    <property type="evidence" value="ECO:0007669"/>
    <property type="project" value="Ensembl"/>
</dbReference>
<dbReference type="GO" id="GO:0071356">
    <property type="term" value="P:cellular response to tumor necrosis factor"/>
    <property type="evidence" value="ECO:0007669"/>
    <property type="project" value="Ensembl"/>
</dbReference>
<dbReference type="GO" id="GO:0007186">
    <property type="term" value="P:G protein-coupled receptor signaling pathway"/>
    <property type="evidence" value="ECO:0000304"/>
    <property type="project" value="ProtInc"/>
</dbReference>
<dbReference type="GO" id="GO:0035733">
    <property type="term" value="P:hepatic stellate cell activation"/>
    <property type="evidence" value="ECO:0007669"/>
    <property type="project" value="Ensembl"/>
</dbReference>
<dbReference type="GO" id="GO:0050804">
    <property type="term" value="P:modulation of chemical synaptic transmission"/>
    <property type="evidence" value="ECO:0007669"/>
    <property type="project" value="Ensembl"/>
</dbReference>
<dbReference type="GO" id="GO:0043116">
    <property type="term" value="P:negative regulation of vascular permeability"/>
    <property type="evidence" value="ECO:0007669"/>
    <property type="project" value="Ensembl"/>
</dbReference>
<dbReference type="GO" id="GO:0070374">
    <property type="term" value="P:positive regulation of ERK1 and ERK2 cascade"/>
    <property type="evidence" value="ECO:0007669"/>
    <property type="project" value="Ensembl"/>
</dbReference>
<dbReference type="GO" id="GO:0061870">
    <property type="term" value="P:positive regulation of hepatic stellate cell migration"/>
    <property type="evidence" value="ECO:0007669"/>
    <property type="project" value="Ensembl"/>
</dbReference>
<dbReference type="GO" id="GO:1900143">
    <property type="term" value="P:positive regulation of oligodendrocyte apoptotic process"/>
    <property type="evidence" value="ECO:0007669"/>
    <property type="project" value="Ensembl"/>
</dbReference>
<dbReference type="GO" id="GO:0010739">
    <property type="term" value="P:positive regulation of protein kinase A signaling"/>
    <property type="evidence" value="ECO:0007669"/>
    <property type="project" value="InterPro"/>
</dbReference>
<dbReference type="GO" id="GO:0032760">
    <property type="term" value="P:positive regulation of tumor necrosis factor production"/>
    <property type="evidence" value="ECO:0007669"/>
    <property type="project" value="Ensembl"/>
</dbReference>
<dbReference type="GO" id="GO:0010738">
    <property type="term" value="P:regulation of protein kinase A signaling"/>
    <property type="evidence" value="ECO:0000315"/>
    <property type="project" value="UniProtKB"/>
</dbReference>
<dbReference type="GO" id="GO:0090036">
    <property type="term" value="P:regulation of protein kinase C signaling"/>
    <property type="evidence" value="ECO:0007669"/>
    <property type="project" value="InterPro"/>
</dbReference>
<dbReference type="GO" id="GO:0051602">
    <property type="term" value="P:response to electrical stimulus"/>
    <property type="evidence" value="ECO:0007669"/>
    <property type="project" value="Ensembl"/>
</dbReference>
<dbReference type="GO" id="GO:0032496">
    <property type="term" value="P:response to lipopolysaccharide"/>
    <property type="evidence" value="ECO:0007669"/>
    <property type="project" value="Ensembl"/>
</dbReference>
<dbReference type="GO" id="GO:0007165">
    <property type="term" value="P:signal transduction"/>
    <property type="evidence" value="ECO:0000318"/>
    <property type="project" value="GO_Central"/>
</dbReference>
<dbReference type="InterPro" id="IPR028540">
    <property type="entry name" value="AKAP12"/>
</dbReference>
<dbReference type="InterPro" id="IPR001573">
    <property type="entry name" value="AKAP_WSK"/>
</dbReference>
<dbReference type="InterPro" id="IPR018459">
    <property type="entry name" value="RII-bd_1"/>
</dbReference>
<dbReference type="PANTHER" id="PTHR23209">
    <property type="entry name" value="A-KINASE ANCHOR PROTEIN 12"/>
    <property type="match status" value="1"/>
</dbReference>
<dbReference type="PANTHER" id="PTHR23209:SF4">
    <property type="entry name" value="A-KINASE ANCHOR PROTEIN 12"/>
    <property type="match status" value="1"/>
</dbReference>
<dbReference type="Pfam" id="PF10522">
    <property type="entry name" value="RII_binding_1"/>
    <property type="match status" value="1"/>
</dbReference>
<dbReference type="Pfam" id="PF03832">
    <property type="entry name" value="WSK"/>
    <property type="match status" value="3"/>
</dbReference>
<dbReference type="PROSITE" id="PS51893">
    <property type="entry name" value="AKAP_CAM_BD"/>
    <property type="match status" value="3"/>
</dbReference>
<accession>Q02952</accession>
<accession>O00310</accession>
<accession>O00498</accession>
<accession>Q4LE68</accession>
<accession>Q5SZ80</accession>
<accession>Q5TGN1</accession>
<accession>Q68D82</accession>
<accession>Q99970</accession>
<keyword id="KW-0025">Alternative splicing</keyword>
<keyword id="KW-0112">Calmodulin-binding</keyword>
<keyword id="KW-0963">Cytoplasm</keyword>
<keyword id="KW-0206">Cytoskeleton</keyword>
<keyword id="KW-1017">Isopeptide bond</keyword>
<keyword id="KW-0449">Lipoprotein</keyword>
<keyword id="KW-0472">Membrane</keyword>
<keyword id="KW-0519">Myristate</keyword>
<keyword id="KW-0597">Phosphoprotein</keyword>
<keyword id="KW-1267">Proteomics identification</keyword>
<keyword id="KW-1185">Reference proteome</keyword>
<keyword id="KW-0677">Repeat</keyword>
<keyword id="KW-0832">Ubl conjugation</keyword>
<gene>
    <name type="primary">AKAP12</name>
    <name type="synonym">AKAP250</name>
</gene>
<protein>
    <recommendedName>
        <fullName>A-kinase anchor protein 12</fullName>
        <shortName>AKAP-12</shortName>
    </recommendedName>
    <alternativeName>
        <fullName>A-kinase anchor protein 250 kDa</fullName>
        <shortName>AKAP 250</shortName>
    </alternativeName>
    <alternativeName>
        <fullName>Gravin</fullName>
    </alternativeName>
    <alternativeName>
        <fullName>Myasthenia gravis autoantigen</fullName>
    </alternativeName>
</protein>
<sequence>MGAGSSTEQRSPEQPPEGSSTPAEPEPSGGGPSAEAAPDTTADPAIAASDPATKLLQKNGQLSTINGVAEQDELSLQEGDLNGQKGALNGQGALNSQEEEEVIVTEVGQRDSEDVSKRDSDKEMATKSAVVHDITDDGQEETPEIIEQIPSSESNLEELTQPTESQANDIGFKKVFKFVGFKFTVKKDKTEKPDTVQLLTVKKDEGEGAAGAGDHKDPSLGAGEAASKESEPKQSTEKPEETLKREQSHAEISPPAESGQAVEECKEEGEEKQEKEPSKSAESPTSPVTSETGSTFKKFFTQGWAGWRKKTSFRKPKEDEVEASEKKKEQEPEKVDTEEDGKAEVASEKLTASEQAHPQEPAESAHEPRLSAEYEKVELPSEEQVSGSQGPSEEKPAPLATEVFDEKIEVHQEEVVAEVHVSTVEERTEEQKTEVEETAGSVPAEELVEMDAEPQEAEPAKELVKLKETCVSGEDPTQGADLSPDEKVLSKPPEGVVSEVEMLSSQERMKVQGSPLKKLFTSTGLKKLSGKKQKGKRGGGDEESGEHTQVPADSPDSQEEQKGESSASSPEEPEEITCLEKGLAEVQQDGEAEEGATSDGEKKREGVTPWASFKKMVTPKKRVRRPSESDKEDELDKVKSATLSSTESTASEMQEEMKGSVEEPKPEEPKRKVDTSVSWEALICVGSSKKRARRGSSSDEEGGPKAMGGDHQKADEAGKDKETGTDGILAGSQEHDPGQGSSSPEQAGSPTEGEGVSTWESFKRLVTPRKKSKSKLEEKSEDSIAGSGVEHSTPDTEPGKEESWVSIKKFIPGRRKKRPDGKQEQAPVEDAGPTGANEDDSDVPAVVPLSEYDAVEREKMEAQQAQKSAEQPEQKAATEVSKELSESQVHMMAAAVADGTRAATIIEERSPSWISASVTEPLEQVEAEAALLTEEVLEREVIAEEEPPTVTEPLPENREARGDTVVSEAELTPEAVTAAETAGPLGAEEGTEASAAEETTEMVSAVSQLTDSPDTTEEATPVQEVEGGVPDIEEQERRTQEVLQAVAEKVKEESQLPGTGGPEDVLQPVQRAEAERPEEQAEASGLKKETDVVLKVDAQEAKTEPFTQGKVVGQTTPESFEKAPQVTESIESSELVTTCQAETLAGVKSQEMVMEQAIPPDSVETPTDSETDGSTPVADFDAPGTTQKDEIVEIHEENEVASGTQSGGTEAEAVPAQKERPPAPSSFVFQEETKEQSKMEDTLEHTDKEVSVETVSILSKTEGTQEADQYADEKTKDVPFFEGLEGSIDTGITVSREKVTEVALKGEGTEEAECKKDDALELQSHAKSPPSPVEREMVVQVEREKTEAEPTHVNEEKLEHETAVTVSEEVSKQLLQTVNVPIIDGAKEVSSLEGSPPPCLGQEEAVCTKIQVQSSEASFTLTAAAEEEKVLGETANILETGETLEPAGAHLVLEEKSSEKNEDFAAHPGEDAVPTGPDCQAKSTPVIVSATTKKGLSSDLEGEKTTSLKWKSDEVDEQVACQEVKVSVAIEDLEPENGILELETKSSKLVQNIIQTAVDQFVRTEETATEMLTSELQTQAHVIKADSQDAGQETEKEGEEPQASAQDETPITSAKEESESTAVGQAHSDISKDMSEASEKTMTVEVEGSTVNDQQLEEVVLPSEEEGGGAGTKSVPEDDGHALLAERIEKSLVEPKEDEKGDDVDDPENQNSALADTDASGGLTKESPDTNGPKQKEKEDAQEVELQEGKVHSESDKAITPQAQEELQKQERESAKSELTES</sequence>
<evidence type="ECO:0000250" key="1">
    <source>
        <dbReference type="UniProtKB" id="Q5QD51"/>
    </source>
</evidence>
<evidence type="ECO:0000250" key="2">
    <source>
        <dbReference type="UniProtKB" id="Q9WTQ5"/>
    </source>
</evidence>
<evidence type="ECO:0000255" key="3">
    <source>
        <dbReference type="PROSITE-ProRule" id="PRU01241"/>
    </source>
</evidence>
<evidence type="ECO:0000256" key="4">
    <source>
        <dbReference type="SAM" id="MobiDB-lite"/>
    </source>
</evidence>
<evidence type="ECO:0000269" key="5">
    <source>
    </source>
</evidence>
<evidence type="ECO:0000269" key="6">
    <source>
    </source>
</evidence>
<evidence type="ECO:0000269" key="7">
    <source>
    </source>
</evidence>
<evidence type="ECO:0000269" key="8">
    <source>
    </source>
</evidence>
<evidence type="ECO:0000269" key="9">
    <source>
    </source>
</evidence>
<evidence type="ECO:0000269" key="10">
    <source>
    </source>
</evidence>
<evidence type="ECO:0000269" key="11">
    <source ref="3"/>
</evidence>
<evidence type="ECO:0000269" key="12">
    <source ref="6"/>
</evidence>
<evidence type="ECO:0000303" key="13">
    <source>
    </source>
</evidence>
<evidence type="ECO:0000303" key="14">
    <source>
    </source>
</evidence>
<evidence type="ECO:0000305" key="15"/>
<evidence type="ECO:0007744" key="16">
    <source>
    </source>
</evidence>
<evidence type="ECO:0007744" key="17">
    <source>
    </source>
</evidence>
<evidence type="ECO:0007744" key="18">
    <source>
    </source>
</evidence>
<evidence type="ECO:0007744" key="19">
    <source>
    </source>
</evidence>
<evidence type="ECO:0007744" key="20">
    <source>
    </source>
</evidence>
<evidence type="ECO:0007744" key="21">
    <source>
    </source>
</evidence>
<evidence type="ECO:0007744" key="22">
    <source>
    </source>
</evidence>
<feature type="initiator methionine" description="Removed" evidence="8 9">
    <location>
        <position position="1"/>
    </location>
</feature>
<feature type="chain" id="PRO_0000064519" description="A-kinase anchor protein 12">
    <location>
        <begin position="2"/>
        <end position="1782"/>
    </location>
</feature>
<feature type="region of interest" description="Disordered" evidence="4">
    <location>
        <begin position="1"/>
        <end position="53"/>
    </location>
</feature>
<feature type="region of interest" description="Disordered" evidence="4">
    <location>
        <begin position="71"/>
        <end position="169"/>
    </location>
</feature>
<feature type="region of interest" description="Disordered" evidence="4">
    <location>
        <begin position="189"/>
        <end position="400"/>
    </location>
</feature>
<feature type="region of interest" description="Involved in PKC-binding" evidence="15">
    <location>
        <begin position="266"/>
        <end position="557"/>
    </location>
</feature>
<feature type="region of interest" description="Disordered" evidence="4">
    <location>
        <begin position="421"/>
        <end position="886"/>
    </location>
</feature>
<feature type="region of interest" description="Disordered" evidence="4">
    <location>
        <begin position="938"/>
        <end position="1089"/>
    </location>
</feature>
<feature type="region of interest" description="Disordered" evidence="4">
    <location>
        <begin position="1105"/>
        <end position="1134"/>
    </location>
</feature>
<feature type="region of interest" description="Disordered" evidence="4">
    <location>
        <begin position="1157"/>
        <end position="1274"/>
    </location>
</feature>
<feature type="region of interest" description="Disordered" evidence="4">
    <location>
        <begin position="1305"/>
        <end position="1355"/>
    </location>
</feature>
<feature type="region of interest" description="RII-binding" evidence="15">
    <location>
        <begin position="1541"/>
        <end position="1554"/>
    </location>
</feature>
<feature type="region of interest" description="Disordered" evidence="4">
    <location>
        <begin position="1584"/>
        <end position="1782"/>
    </location>
</feature>
<feature type="short sequence motif" description="AKAP CaM-binding 1" evidence="3">
    <location>
        <begin position="607"/>
        <end position="627"/>
    </location>
</feature>
<feature type="short sequence motif" description="AKAP CaM-binding 2" evidence="3">
    <location>
        <begin position="756"/>
        <end position="776"/>
    </location>
</feature>
<feature type="short sequence motif" description="AKAP CaM-binding 3" evidence="3">
    <location>
        <begin position="801"/>
        <end position="821"/>
    </location>
</feature>
<feature type="compositionally biased region" description="Low complexity" evidence="4">
    <location>
        <begin position="16"/>
        <end position="53"/>
    </location>
</feature>
<feature type="compositionally biased region" description="Basic and acidic residues" evidence="4">
    <location>
        <begin position="108"/>
        <end position="125"/>
    </location>
</feature>
<feature type="compositionally biased region" description="Low complexity" evidence="4">
    <location>
        <begin position="145"/>
        <end position="154"/>
    </location>
</feature>
<feature type="compositionally biased region" description="Polar residues" evidence="4">
    <location>
        <begin position="157"/>
        <end position="168"/>
    </location>
</feature>
<feature type="compositionally biased region" description="Basic and acidic residues" evidence="4">
    <location>
        <begin position="226"/>
        <end position="249"/>
    </location>
</feature>
<feature type="compositionally biased region" description="Basic and acidic residues" evidence="4">
    <location>
        <begin position="315"/>
        <end position="347"/>
    </location>
</feature>
<feature type="compositionally biased region" description="Basic and acidic residues" evidence="4">
    <location>
        <begin position="363"/>
        <end position="379"/>
    </location>
</feature>
<feature type="compositionally biased region" description="Basic and acidic residues" evidence="4">
    <location>
        <begin position="423"/>
        <end position="435"/>
    </location>
</feature>
<feature type="compositionally biased region" description="Acidic residues" evidence="4">
    <location>
        <begin position="446"/>
        <end position="456"/>
    </location>
</feature>
<feature type="compositionally biased region" description="Basic and acidic residues" evidence="4">
    <location>
        <begin position="458"/>
        <end position="468"/>
    </location>
</feature>
<feature type="compositionally biased region" description="Basic residues" evidence="4">
    <location>
        <begin position="528"/>
        <end position="537"/>
    </location>
</feature>
<feature type="compositionally biased region" description="Basic and acidic residues" evidence="4">
    <location>
        <begin position="625"/>
        <end position="639"/>
    </location>
</feature>
<feature type="compositionally biased region" description="Low complexity" evidence="4">
    <location>
        <begin position="640"/>
        <end position="652"/>
    </location>
</feature>
<feature type="compositionally biased region" description="Basic and acidic residues" evidence="4">
    <location>
        <begin position="655"/>
        <end position="674"/>
    </location>
</feature>
<feature type="compositionally biased region" description="Basic and acidic residues" evidence="4">
    <location>
        <begin position="708"/>
        <end position="724"/>
    </location>
</feature>
<feature type="compositionally biased region" description="Polar residues" evidence="4">
    <location>
        <begin position="739"/>
        <end position="749"/>
    </location>
</feature>
<feature type="compositionally biased region" description="Basic and acidic residues" evidence="4">
    <location>
        <begin position="792"/>
        <end position="803"/>
    </location>
</feature>
<feature type="compositionally biased region" description="Low complexity" evidence="4">
    <location>
        <begin position="986"/>
        <end position="997"/>
    </location>
</feature>
<feature type="compositionally biased region" description="Basic and acidic residues" evidence="4">
    <location>
        <begin position="1072"/>
        <end position="1089"/>
    </location>
</feature>
<feature type="compositionally biased region" description="Polar residues" evidence="4">
    <location>
        <begin position="1164"/>
        <end position="1174"/>
    </location>
</feature>
<feature type="compositionally biased region" description="Basic and acidic residues" evidence="4">
    <location>
        <begin position="1187"/>
        <end position="1198"/>
    </location>
</feature>
<feature type="compositionally biased region" description="Basic and acidic residues" evidence="4">
    <location>
        <begin position="1231"/>
        <end position="1251"/>
    </location>
</feature>
<feature type="compositionally biased region" description="Polar residues" evidence="4">
    <location>
        <begin position="1253"/>
        <end position="1267"/>
    </location>
</feature>
<feature type="compositionally biased region" description="Basic and acidic residues" evidence="4">
    <location>
        <begin position="1333"/>
        <end position="1355"/>
    </location>
</feature>
<feature type="compositionally biased region" description="Polar residues" evidence="4">
    <location>
        <begin position="1603"/>
        <end position="1612"/>
    </location>
</feature>
<feature type="compositionally biased region" description="Basic and acidic residues" evidence="4">
    <location>
        <begin position="1629"/>
        <end position="1639"/>
    </location>
</feature>
<feature type="compositionally biased region" description="Basic and acidic residues" evidence="4">
    <location>
        <begin position="1675"/>
        <end position="1699"/>
    </location>
</feature>
<feature type="compositionally biased region" description="Basic and acidic residues" evidence="4">
    <location>
        <begin position="1734"/>
        <end position="1757"/>
    </location>
</feature>
<feature type="compositionally biased region" description="Basic and acidic residues" evidence="4">
    <location>
        <begin position="1766"/>
        <end position="1782"/>
    </location>
</feature>
<feature type="modified residue" description="Phosphoserine" evidence="1">
    <location>
        <position position="11"/>
    </location>
</feature>
<feature type="modified residue" description="Phosphoserine" evidence="2">
    <location>
        <position position="19"/>
    </location>
</feature>
<feature type="modified residue" description="Phosphoserine" evidence="2">
    <location>
        <position position="28"/>
    </location>
</feature>
<feature type="modified residue" description="Phosphoserine" evidence="19">
    <location>
        <position position="75"/>
    </location>
</feature>
<feature type="modified residue" description="Phosphoserine" evidence="19">
    <location>
        <position position="96"/>
    </location>
</feature>
<feature type="modified residue" description="Phosphoserine" evidence="21">
    <location>
        <position position="154"/>
    </location>
</feature>
<feature type="modified residue" description="Phosphoserine" evidence="16">
    <location>
        <position position="219"/>
    </location>
</feature>
<feature type="modified residue" description="Phosphoserine" evidence="2">
    <location>
        <position position="248"/>
    </location>
</feature>
<feature type="modified residue" description="Phosphoserine" evidence="1">
    <location>
        <position position="258"/>
    </location>
</feature>
<feature type="modified residue" description="Phosphoserine" evidence="1">
    <location>
        <position position="280"/>
    </location>
</feature>
<feature type="modified residue" description="Phosphoserine" evidence="2">
    <location>
        <position position="283"/>
    </location>
</feature>
<feature type="modified residue" description="Phosphoserine" evidence="2">
    <location>
        <position position="286"/>
    </location>
</feature>
<feature type="modified residue" description="Phosphoserine" evidence="1">
    <location>
        <position position="347"/>
    </location>
</feature>
<feature type="modified residue" description="Phosphoserine" evidence="19">
    <location>
        <position position="371"/>
    </location>
</feature>
<feature type="modified residue" description="Phosphotyrosine" evidence="2">
    <location>
        <position position="374"/>
    </location>
</feature>
<feature type="modified residue" description="Phosphoserine" evidence="19">
    <location>
        <position position="381"/>
    </location>
</feature>
<feature type="modified residue" description="Phosphoserine" evidence="2">
    <location>
        <position position="392"/>
    </location>
</feature>
<feature type="modified residue" description="Phosphoserine" evidence="19 21">
    <location>
        <position position="483"/>
    </location>
</feature>
<feature type="modified residue" description="Phosphoserine" evidence="17">
    <location>
        <position position="505"/>
    </location>
</feature>
<feature type="modified residue" description="Phosphoserine" evidence="1">
    <location>
        <position position="554"/>
    </location>
</feature>
<feature type="modified residue" description="Phosphoserine" evidence="19">
    <location>
        <position position="557"/>
    </location>
</feature>
<feature type="modified residue" description="Phosphoserine" evidence="19 21">
    <location>
        <position position="598"/>
    </location>
</feature>
<feature type="modified residue" description="Phosphoserine" evidence="19 20 21">
    <location>
        <position position="612"/>
    </location>
</feature>
<feature type="modified residue" description="Phosphoserine" evidence="19 20 21">
    <location>
        <position position="627"/>
    </location>
</feature>
<feature type="modified residue" description="Phosphoserine" evidence="20">
    <location>
        <position position="629"/>
    </location>
</feature>
<feature type="modified residue" description="Phosphothreonine" evidence="1">
    <location>
        <position position="642"/>
    </location>
</feature>
<feature type="modified residue" description="Phosphoserine" evidence="1">
    <location>
        <position position="644"/>
    </location>
</feature>
<feature type="modified residue" description="Phosphoserine" evidence="19">
    <location>
        <position position="645"/>
    </location>
</feature>
<feature type="modified residue" description="Phosphoserine" evidence="2">
    <location>
        <position position="648"/>
    </location>
</feature>
<feature type="modified residue" description="Phosphoserine" evidence="2">
    <location>
        <position position="651"/>
    </location>
</feature>
<feature type="modified residue" description="Phosphoserine" evidence="21">
    <location>
        <position position="696"/>
    </location>
</feature>
<feature type="modified residue" description="Phosphoserine" evidence="21">
    <location>
        <position position="697"/>
    </location>
</feature>
<feature type="modified residue" description="Phosphoserine" evidence="21">
    <location>
        <position position="698"/>
    </location>
</feature>
<feature type="modified residue" description="Phosphoserine" evidence="2">
    <location>
        <position position="749"/>
    </location>
</feature>
<feature type="modified residue" description="Phosphoserine" evidence="21">
    <location>
        <position position="761"/>
    </location>
</feature>
<feature type="modified residue" description="Phosphoserine" evidence="2">
    <location>
        <position position="787"/>
    </location>
</feature>
<feature type="modified residue" description="Phosphoserine" evidence="2">
    <location>
        <position position="806"/>
    </location>
</feature>
<feature type="modified residue" description="Phosphoserine" evidence="21">
    <location>
        <position position="1328"/>
    </location>
</feature>
<feature type="modified residue" description="Phosphoserine" evidence="19">
    <location>
        <position position="1331"/>
    </location>
</feature>
<feature type="modified residue" description="Phosphoserine" evidence="2">
    <location>
        <position position="1391"/>
    </location>
</feature>
<feature type="modified residue" description="Phosphoserine" evidence="18 21">
    <location>
        <position position="1395"/>
    </location>
</feature>
<feature type="modified residue" description="Phosphoserine" evidence="19 21">
    <location>
        <position position="1587"/>
    </location>
</feature>
<feature type="modified residue" description="Phosphoserine" evidence="2">
    <location>
        <position position="1727"/>
    </location>
</feature>
<feature type="lipid moiety-binding region" description="N-myristoyl glycine" evidence="7 8 9">
    <location>
        <position position="2"/>
    </location>
</feature>
<feature type="cross-link" description="Glycyl lysine isopeptide (Lys-Gly) (interchain with G-Cter in SUMO1)" evidence="22">
    <location>
        <position position="1051"/>
    </location>
</feature>
<feature type="splice variant" id="VSP_028133" description="In isoform 3." evidence="13">
    <location>
        <begin position="1"/>
        <end position="105"/>
    </location>
</feature>
<feature type="splice variant" id="VSP_004110" description="In isoform 2." evidence="14">
    <location>
        <begin position="1"/>
        <end position="98"/>
    </location>
</feature>
<feature type="splice variant" id="VSP_004111" description="In isoform 2." evidence="14">
    <original>EEEVIVTE</original>
    <variation>MLGTITIT</variation>
    <location>
        <begin position="99"/>
        <end position="106"/>
    </location>
</feature>
<feature type="splice variant" id="VSP_028134" description="In isoform 3." evidence="13">
    <original>E</original>
    <variation>M</variation>
    <location>
        <position position="106"/>
    </location>
</feature>
<feature type="sequence variant" id="VAR_035115" description="In dbSNP:rs10872670." evidence="10 11 12 21">
    <original>K</original>
    <variation>E</variation>
    <location>
        <position position="117"/>
    </location>
</feature>
<feature type="sequence variant" id="VAR_035116" description="In dbSNP:rs3734799." evidence="6 10 11 12">
    <original>K</original>
    <variation>Q</variation>
    <location>
        <position position="216"/>
    </location>
</feature>
<feature type="sequence variant" id="VAR_035780" description="In a colorectal cancer sample; somatic mutation; dbSNP:rs552053449." evidence="5">
    <original>E</original>
    <variation>K</variation>
    <location>
        <position position="240"/>
    </location>
</feature>
<feature type="sequence variant" id="VAR_035117" description="In dbSNP:rs13212161." evidence="6">
    <original>E</original>
    <variation>G</variation>
    <location>
        <position position="920"/>
    </location>
</feature>
<feature type="sequence variant" id="VAR_056731" description="In dbSNP:rs1042069." evidence="10">
    <original>A</original>
    <variation>S</variation>
    <location>
        <position position="987"/>
    </location>
</feature>
<feature type="sequence variant" id="VAR_035118" description="In dbSNP:rs3734797.">
    <original>V</original>
    <variation>I</variation>
    <location>
        <position position="1096"/>
    </location>
</feature>
<feature type="sequence variant" id="VAR_035119" description="In dbSNP:rs9478198.">
    <original>R</original>
    <variation>L</variation>
    <location>
        <position position="1296"/>
    </location>
</feature>
<feature type="sequence variant" id="VAR_035120" description="In dbSNP:rs12201388." evidence="6">
    <original>E</original>
    <variation>K</variation>
    <location>
        <position position="1355"/>
    </location>
</feature>
<feature type="sequence variant" id="VAR_035121" description="In dbSNP:rs3823310." evidence="11">
    <original>E</original>
    <variation>D</variation>
    <location>
        <position position="1600"/>
    </location>
</feature>
<feature type="sequence variant" id="VAR_035122" description="In dbSNP:rs3734795.">
    <original>E</original>
    <variation>D</variation>
    <location>
        <position position="1689"/>
    </location>
</feature>
<feature type="sequence conflict" description="In Ref. 1; AAC51366." evidence="15" ref="1">
    <original>TPEI</original>
    <variation>NRN</variation>
    <location>
        <begin position="142"/>
        <end position="145"/>
    </location>
</feature>
<feature type="sequence conflict" description="In Ref. 3; BAE06085." evidence="15" ref="3">
    <original>T</original>
    <variation>I</variation>
    <location>
        <position position="423"/>
    </location>
</feature>
<feature type="sequence conflict" description="In Ref. 1; AAC51366." evidence="15" ref="1">
    <original>E</original>
    <variation>G</variation>
    <location>
        <position position="449"/>
    </location>
</feature>
<feature type="sequence conflict" description="In Ref. 1; AAC51366." evidence="15" ref="1">
    <original>G</original>
    <variation>R</variation>
    <location>
        <position position="695"/>
    </location>
</feature>
<feature type="sequence conflict" description="In Ref. 1; AAC51366." evidence="15" ref="1">
    <original>S</original>
    <variation>G</variation>
    <location>
        <position position="868"/>
    </location>
</feature>
<feature type="sequence conflict" description="In Ref. 4; CAH18338." evidence="15" ref="4">
    <original>E</original>
    <variation>G</variation>
    <location>
        <position position="946"/>
    </location>
</feature>
<feature type="sequence conflict" description="In Ref. 4; CAH18338." evidence="15" ref="4">
    <original>A</original>
    <variation>T</variation>
    <location>
        <position position="1182"/>
    </location>
</feature>
<feature type="sequence conflict" description="In Ref. 4; CAH18338, 3; BAE06085, 6; AAB58938 and 7; AAA35931." evidence="15" ref="4 3 6 7">
    <original>E</original>
    <variation>EE</variation>
    <location>
        <position position="1531"/>
    </location>
</feature>
<feature type="sequence conflict" description="In Ref. 4; CAH18338 and 7; AAA35931." evidence="15" ref="4 7">
    <original>V</original>
    <variation>M</variation>
    <location>
        <position position="1582"/>
    </location>
</feature>
<feature type="sequence conflict" description="In Ref. 2; BAA19927." evidence="15" ref="2">
    <original>Q</original>
    <variation>L</variation>
    <location>
        <position position="1602"/>
    </location>
</feature>
<reference key="1">
    <citation type="journal article" date="1997" name="Curr. Biol.">
        <title>Gravin, an autoantigen recognized by serum from myasthenia gravis patients, is a kinase scaffold protein.</title>
        <authorList>
            <person name="Nauert J.B."/>
            <person name="Klauck T.M."/>
            <person name="Langeberg L.K."/>
            <person name="Scott J.D."/>
        </authorList>
    </citation>
    <scope>NUCLEOTIDE SEQUENCE [MRNA] (ISOFORM 1)</scope>
    <scope>VARIANTS GLU-117; GLN-216 AND SER-987</scope>
    <source>
        <tissue>Heart</tissue>
    </source>
</reference>
<reference key="2">
    <citation type="journal article" date="1998" name="J. Biochem.">
        <title>Changes of gene expression by lysophosphatidylcholine in vascular endothelial cells: 12 up-regulated distinct genes including 5 cell growth-related, 3 thrombosis-related, and 4 others.</title>
        <authorList>
            <person name="Sato N."/>
            <person name="Kokame K."/>
            <person name="Shimokado K."/>
            <person name="Kato H."/>
            <person name="Miyata T."/>
        </authorList>
    </citation>
    <scope>NUCLEOTIDE SEQUENCE [MRNA] (ISOFORM 2)</scope>
    <source>
        <tissue>Umbilical vein endothelial cell</tissue>
    </source>
</reference>
<reference key="3">
    <citation type="submission" date="2005-03" db="EMBL/GenBank/DDBJ databases">
        <title>Preparation of a set of expression-ready clones of mammalian long cDNAs encoding large proteins by the ORF trap cloning method.</title>
        <authorList>
            <person name="Nakajima D."/>
            <person name="Saito K."/>
            <person name="Yamakawa H."/>
            <person name="Kikuno R.F."/>
            <person name="Nakayama M."/>
            <person name="Ohara R."/>
            <person name="Okazaki N."/>
            <person name="Koga H."/>
            <person name="Nagase T."/>
            <person name="Ohara O."/>
        </authorList>
    </citation>
    <scope>NUCLEOTIDE SEQUENCE [LARGE SCALE MRNA] (ISOFORM 1)</scope>
    <scope>VARIANTS GLU-117; GLN-216 AND ASP-1600</scope>
    <source>
        <tissue>Brain</tissue>
    </source>
</reference>
<reference key="4">
    <citation type="journal article" date="2007" name="BMC Genomics">
        <title>The full-ORF clone resource of the German cDNA consortium.</title>
        <authorList>
            <person name="Bechtel S."/>
            <person name="Rosenfelder H."/>
            <person name="Duda A."/>
            <person name="Schmidt C.P."/>
            <person name="Ernst U."/>
            <person name="Wellenreuther R."/>
            <person name="Mehrle A."/>
            <person name="Schuster C."/>
            <person name="Bahr A."/>
            <person name="Bloecker H."/>
            <person name="Heubner D."/>
            <person name="Hoerlein A."/>
            <person name="Michel G."/>
            <person name="Wedler H."/>
            <person name="Koehrer K."/>
            <person name="Ottenwaelder B."/>
            <person name="Poustka A."/>
            <person name="Wiemann S."/>
            <person name="Schupp I."/>
        </authorList>
    </citation>
    <scope>NUCLEOTIDE SEQUENCE [LARGE SCALE MRNA] (ISOFORM 3)</scope>
    <scope>VARIANTS GLN-216; GLY-920 AND LYS-1355</scope>
    <source>
        <tissue>Testis</tissue>
    </source>
</reference>
<reference key="5">
    <citation type="journal article" date="2003" name="Nature">
        <title>The DNA sequence and analysis of human chromosome 6.</title>
        <authorList>
            <person name="Mungall A.J."/>
            <person name="Palmer S.A."/>
            <person name="Sims S.K."/>
            <person name="Edwards C.A."/>
            <person name="Ashurst J.L."/>
            <person name="Wilming L."/>
            <person name="Jones M.C."/>
            <person name="Horton R."/>
            <person name="Hunt S.E."/>
            <person name="Scott C.E."/>
            <person name="Gilbert J.G.R."/>
            <person name="Clamp M.E."/>
            <person name="Bethel G."/>
            <person name="Milne S."/>
            <person name="Ainscough R."/>
            <person name="Almeida J.P."/>
            <person name="Ambrose K.D."/>
            <person name="Andrews T.D."/>
            <person name="Ashwell R.I.S."/>
            <person name="Babbage A.K."/>
            <person name="Bagguley C.L."/>
            <person name="Bailey J."/>
            <person name="Banerjee R."/>
            <person name="Barker D.J."/>
            <person name="Barlow K.F."/>
            <person name="Bates K."/>
            <person name="Beare D.M."/>
            <person name="Beasley H."/>
            <person name="Beasley O."/>
            <person name="Bird C.P."/>
            <person name="Blakey S.E."/>
            <person name="Bray-Allen S."/>
            <person name="Brook J."/>
            <person name="Brown A.J."/>
            <person name="Brown J.Y."/>
            <person name="Burford D.C."/>
            <person name="Burrill W."/>
            <person name="Burton J."/>
            <person name="Carder C."/>
            <person name="Carter N.P."/>
            <person name="Chapman J.C."/>
            <person name="Clark S.Y."/>
            <person name="Clark G."/>
            <person name="Clee C.M."/>
            <person name="Clegg S."/>
            <person name="Cobley V."/>
            <person name="Collier R.E."/>
            <person name="Collins J.E."/>
            <person name="Colman L.K."/>
            <person name="Corby N.R."/>
            <person name="Coville G.J."/>
            <person name="Culley K.M."/>
            <person name="Dhami P."/>
            <person name="Davies J."/>
            <person name="Dunn M."/>
            <person name="Earthrowl M.E."/>
            <person name="Ellington A.E."/>
            <person name="Evans K.A."/>
            <person name="Faulkner L."/>
            <person name="Francis M.D."/>
            <person name="Frankish A."/>
            <person name="Frankland J."/>
            <person name="French L."/>
            <person name="Garner P."/>
            <person name="Garnett J."/>
            <person name="Ghori M.J."/>
            <person name="Gilby L.M."/>
            <person name="Gillson C.J."/>
            <person name="Glithero R.J."/>
            <person name="Grafham D.V."/>
            <person name="Grant M."/>
            <person name="Gribble S."/>
            <person name="Griffiths C."/>
            <person name="Griffiths M.N.D."/>
            <person name="Hall R."/>
            <person name="Halls K.S."/>
            <person name="Hammond S."/>
            <person name="Harley J.L."/>
            <person name="Hart E.A."/>
            <person name="Heath P.D."/>
            <person name="Heathcott R."/>
            <person name="Holmes S.J."/>
            <person name="Howden P.J."/>
            <person name="Howe K.L."/>
            <person name="Howell G.R."/>
            <person name="Huckle E."/>
            <person name="Humphray S.J."/>
            <person name="Humphries M.D."/>
            <person name="Hunt A.R."/>
            <person name="Johnson C.M."/>
            <person name="Joy A.A."/>
            <person name="Kay M."/>
            <person name="Keenan S.J."/>
            <person name="Kimberley A.M."/>
            <person name="King A."/>
            <person name="Laird G.K."/>
            <person name="Langford C."/>
            <person name="Lawlor S."/>
            <person name="Leongamornlert D.A."/>
            <person name="Leversha M."/>
            <person name="Lloyd C.R."/>
            <person name="Lloyd D.M."/>
            <person name="Loveland J.E."/>
            <person name="Lovell J."/>
            <person name="Martin S."/>
            <person name="Mashreghi-Mohammadi M."/>
            <person name="Maslen G.L."/>
            <person name="Matthews L."/>
            <person name="McCann O.T."/>
            <person name="McLaren S.J."/>
            <person name="McLay K."/>
            <person name="McMurray A."/>
            <person name="Moore M.J.F."/>
            <person name="Mullikin J.C."/>
            <person name="Niblett D."/>
            <person name="Nickerson T."/>
            <person name="Novik K.L."/>
            <person name="Oliver K."/>
            <person name="Overton-Larty E.K."/>
            <person name="Parker A."/>
            <person name="Patel R."/>
            <person name="Pearce A.V."/>
            <person name="Peck A.I."/>
            <person name="Phillimore B.J.C.T."/>
            <person name="Phillips S."/>
            <person name="Plumb R.W."/>
            <person name="Porter K.M."/>
            <person name="Ramsey Y."/>
            <person name="Ranby S.A."/>
            <person name="Rice C.M."/>
            <person name="Ross M.T."/>
            <person name="Searle S.M."/>
            <person name="Sehra H.K."/>
            <person name="Sheridan E."/>
            <person name="Skuce C.D."/>
            <person name="Smith S."/>
            <person name="Smith M."/>
            <person name="Spraggon L."/>
            <person name="Squares S.L."/>
            <person name="Steward C.A."/>
            <person name="Sycamore N."/>
            <person name="Tamlyn-Hall G."/>
            <person name="Tester J."/>
            <person name="Theaker A.J."/>
            <person name="Thomas D.W."/>
            <person name="Thorpe A."/>
            <person name="Tracey A."/>
            <person name="Tromans A."/>
            <person name="Tubby B."/>
            <person name="Wall M."/>
            <person name="Wallis J.M."/>
            <person name="West A.P."/>
            <person name="White S.S."/>
            <person name="Whitehead S.L."/>
            <person name="Whittaker H."/>
            <person name="Wild A."/>
            <person name="Willey D.J."/>
            <person name="Wilmer T.E."/>
            <person name="Wood J.M."/>
            <person name="Wray P.W."/>
            <person name="Wyatt J.C."/>
            <person name="Young L."/>
            <person name="Younger R.M."/>
            <person name="Bentley D.R."/>
            <person name="Coulson A."/>
            <person name="Durbin R.M."/>
            <person name="Hubbard T."/>
            <person name="Sulston J.E."/>
            <person name="Dunham I."/>
            <person name="Rogers J."/>
            <person name="Beck S."/>
        </authorList>
    </citation>
    <scope>NUCLEOTIDE SEQUENCE [LARGE SCALE GENOMIC DNA]</scope>
</reference>
<reference key="6">
    <citation type="submission" date="1997-04" db="EMBL/GenBank/DDBJ databases">
        <title>Sequence of gravin cDNA isolated from a human umbilical vein endothelial cell library.</title>
        <authorList>
            <person name="Bowditch R.D."/>
            <person name="Ginsberg M.H."/>
        </authorList>
    </citation>
    <scope>NUCLEOTIDE SEQUENCE [MRNA] OF 43-1782</scope>
    <scope>VARIANTS GLU-117 AND GLN-216</scope>
    <source>
        <tissue>Umbilical vein endothelial cell</tissue>
    </source>
</reference>
<reference key="7">
    <citation type="journal article" date="1992" name="J. Clin. Invest.">
        <title>Molecular cloning and preliminary characterization of a novel cytoplasmic antigen recognized by myasthenia gravis sera.</title>
        <authorList>
            <person name="Gordon T."/>
            <person name="Grove B."/>
            <person name="Loftus J.C."/>
            <person name="O'Toole T."/>
            <person name="McMillan R."/>
            <person name="Lindstrom J."/>
            <person name="Ginsberg M.H."/>
        </authorList>
    </citation>
    <scope>NUCLEOTIDE SEQUENCE [MRNA] OF 1478-1782</scope>
    <source>
        <tissue>Umbilical vein endothelial cell</tissue>
    </source>
</reference>
<reference key="8">
    <citation type="journal article" date="2004" name="J. Biol. Chem.">
        <title>Multiple promoters direct expression of three AKAP12 isoforms with distinct subcellular and tissue distribution profiles.</title>
        <authorList>
            <person name="Streb J.W."/>
            <person name="Kitchen C.M."/>
            <person name="Gelman I.H."/>
            <person name="Miano J.M."/>
        </authorList>
    </citation>
    <scope>ALTERNATIVE SPLICING</scope>
</reference>
<reference key="9">
    <citation type="journal article" date="2006" name="Cell">
        <title>Global, in vivo, and site-specific phosphorylation dynamics in signaling networks.</title>
        <authorList>
            <person name="Olsen J.V."/>
            <person name="Blagoev B."/>
            <person name="Gnad F."/>
            <person name="Macek B."/>
            <person name="Kumar C."/>
            <person name="Mortensen P."/>
            <person name="Mann M."/>
        </authorList>
    </citation>
    <scope>PHOSPHORYLATION [LARGE SCALE ANALYSIS] AT SER-219</scope>
    <scope>IDENTIFICATION BY MASS SPECTROMETRY [LARGE SCALE ANALYSIS]</scope>
    <source>
        <tissue>Cervix carcinoma</tissue>
    </source>
</reference>
<reference key="10">
    <citation type="journal article" date="2007" name="Science">
        <title>ATM and ATR substrate analysis reveals extensive protein networks responsive to DNA damage.</title>
        <authorList>
            <person name="Matsuoka S."/>
            <person name="Ballif B.A."/>
            <person name="Smogorzewska A."/>
            <person name="McDonald E.R. III"/>
            <person name="Hurov K.E."/>
            <person name="Luo J."/>
            <person name="Bakalarski C.E."/>
            <person name="Zhao Z."/>
            <person name="Solimini N."/>
            <person name="Lerenthal Y."/>
            <person name="Shiloh Y."/>
            <person name="Gygi S.P."/>
            <person name="Elledge S.J."/>
        </authorList>
    </citation>
    <scope>PHOSPHORYLATION [LARGE SCALE ANALYSIS] AT SER-505</scope>
    <scope>IDENTIFICATION BY MASS SPECTROMETRY [LARGE SCALE ANALYSIS]</scope>
    <source>
        <tissue>Embryonic kidney</tissue>
    </source>
</reference>
<reference key="11">
    <citation type="journal article" date="2009" name="Anal. Chem.">
        <title>Lys-N and trypsin cover complementary parts of the phosphoproteome in a refined SCX-based approach.</title>
        <authorList>
            <person name="Gauci S."/>
            <person name="Helbig A.O."/>
            <person name="Slijper M."/>
            <person name="Krijgsveld J."/>
            <person name="Heck A.J."/>
            <person name="Mohammed S."/>
        </authorList>
    </citation>
    <scope>IDENTIFICATION BY MASS SPECTROMETRY [LARGE SCALE ANALYSIS]</scope>
</reference>
<reference key="12">
    <citation type="journal article" date="2009" name="Mol. Cell. Proteomics">
        <title>Large-scale proteomics analysis of the human kinome.</title>
        <authorList>
            <person name="Oppermann F.S."/>
            <person name="Gnad F."/>
            <person name="Olsen J.V."/>
            <person name="Hornberger R."/>
            <person name="Greff Z."/>
            <person name="Keri G."/>
            <person name="Mann M."/>
            <person name="Daub H."/>
        </authorList>
    </citation>
    <scope>PHOSPHORYLATION [LARGE SCALE ANALYSIS] AT SER-1395</scope>
    <scope>IDENTIFICATION BY MASS SPECTROMETRY [LARGE SCALE ANALYSIS]</scope>
</reference>
<reference key="13">
    <citation type="journal article" date="2010" name="Proteomics">
        <title>Strategy for comprehensive identification of human N-myristoylated proteins using an insect cell-free protein synthesis system.</title>
        <authorList>
            <person name="Suzuki T."/>
            <person name="Moriya K."/>
            <person name="Nagatoshi K."/>
            <person name="Ota Y."/>
            <person name="Ezure T."/>
            <person name="Ando E."/>
            <person name="Tsunasawa S."/>
            <person name="Utsumi T."/>
        </authorList>
    </citation>
    <scope>MYRISTOYLATION AT GLY-2</scope>
</reference>
<reference key="14">
    <citation type="journal article" date="2011" name="BMC Syst. Biol.">
        <title>Initial characterization of the human central proteome.</title>
        <authorList>
            <person name="Burkard T.R."/>
            <person name="Planyavsky M."/>
            <person name="Kaupe I."/>
            <person name="Breitwieser F.P."/>
            <person name="Buerckstuemmer T."/>
            <person name="Bennett K.L."/>
            <person name="Superti-Furga G."/>
            <person name="Colinge J."/>
        </authorList>
    </citation>
    <scope>IDENTIFICATION BY MASS SPECTROMETRY [LARGE SCALE ANALYSIS]</scope>
</reference>
<reference key="15">
    <citation type="journal article" date="2011" name="Sci. Signal.">
        <title>System-wide temporal characterization of the proteome and phosphoproteome of human embryonic stem cell differentiation.</title>
        <authorList>
            <person name="Rigbolt K.T."/>
            <person name="Prokhorova T.A."/>
            <person name="Akimov V."/>
            <person name="Henningsen J."/>
            <person name="Johansen P.T."/>
            <person name="Kratchmarova I."/>
            <person name="Kassem M."/>
            <person name="Mann M."/>
            <person name="Olsen J.V."/>
            <person name="Blagoev B."/>
        </authorList>
    </citation>
    <scope>PHOSPHORYLATION [LARGE SCALE ANALYSIS] AT SER-75; SER-96; SER-371; SER-381; SER-483; SER-557; SER-598; SER-612; SER-627; SER-645; SER-1331 AND SER-1587</scope>
    <scope>IDENTIFICATION BY MASS SPECTROMETRY [LARGE SCALE ANALYSIS]</scope>
</reference>
<reference key="16">
    <citation type="journal article" date="2013" name="J. Proteome Res.">
        <title>Toward a comprehensive characterization of a human cancer cell phosphoproteome.</title>
        <authorList>
            <person name="Zhou H."/>
            <person name="Di Palma S."/>
            <person name="Preisinger C."/>
            <person name="Peng M."/>
            <person name="Polat A.N."/>
            <person name="Heck A.J."/>
            <person name="Mohammed S."/>
        </authorList>
    </citation>
    <scope>PHOSPHORYLATION [LARGE SCALE ANALYSIS] AT SER-612; SER-627 AND SER-629</scope>
    <scope>IDENTIFICATION BY MASS SPECTROMETRY [LARGE SCALE ANALYSIS]</scope>
    <source>
        <tissue>Cervix carcinoma</tissue>
        <tissue>Erythroleukemia</tissue>
    </source>
</reference>
<reference key="17">
    <citation type="journal article" date="2014" name="J. Proteomics">
        <title>An enzyme assisted RP-RPLC approach for in-depth analysis of human liver phosphoproteome.</title>
        <authorList>
            <person name="Bian Y."/>
            <person name="Song C."/>
            <person name="Cheng K."/>
            <person name="Dong M."/>
            <person name="Wang F."/>
            <person name="Huang J."/>
            <person name="Sun D."/>
            <person name="Wang L."/>
            <person name="Ye M."/>
            <person name="Zou H."/>
        </authorList>
    </citation>
    <scope>PHOSPHORYLATION [LARGE SCALE ANALYSIS] AT SER-154; SER-483; SER-598; SER-612; SER-627; SER-696; SER-697; SER-698; SER-761; SER-1328; SER-1395 AND SER-1587</scope>
    <scope>VARIANT [LARGE SCALE ANALYSIS] GLU-117</scope>
    <scope>IDENTIFICATION BY MASS SPECTROMETRY [LARGE SCALE ANALYSIS]</scope>
    <source>
        <tissue>Liver</tissue>
    </source>
</reference>
<reference key="18">
    <citation type="journal article" date="2014" name="Nat. Commun.">
        <title>Global profiling of co- and post-translationally N-myristoylated proteomes in human cells.</title>
        <authorList>
            <person name="Thinon E."/>
            <person name="Serwa R.A."/>
            <person name="Broncel M."/>
            <person name="Brannigan J.A."/>
            <person name="Brassat U."/>
            <person name="Wright M.H."/>
            <person name="Heal W.P."/>
            <person name="Wilkinson A.J."/>
            <person name="Mann D.J."/>
            <person name="Tate E.W."/>
        </authorList>
    </citation>
    <scope>MYRISTOYLATION AT GLY-2</scope>
    <scope>CLEAVAGE OF INITIATOR METHIONINE</scope>
    <scope>IDENTIFICATION BY MASS SPECTROMETRY</scope>
</reference>
<reference key="19">
    <citation type="journal article" date="2014" name="Proc. Natl. Acad. Sci. U.S.A.">
        <title>Mapping of SUMO sites and analysis of SUMOylation changes induced by external stimuli.</title>
        <authorList>
            <person name="Impens F."/>
            <person name="Radoshevich L."/>
            <person name="Cossart P."/>
            <person name="Ribet D."/>
        </authorList>
    </citation>
    <scope>SUMOYLATION [LARGE SCALE ANALYSIS] AT LYS-1051</scope>
    <scope>IDENTIFICATION BY MASS SPECTROMETRY [LARGE SCALE ANALYSIS]</scope>
</reference>
<reference key="20">
    <citation type="journal article" date="2015" name="Angew. Chem. Int. Ed.">
        <title>Multifunctional reagents for quantitative proteome-wide analysis of protein modification in human cells and dynamic profiling of protein lipidation during vertebrate development.</title>
        <authorList>
            <person name="Broncel M."/>
            <person name="Serwa R.A."/>
            <person name="Ciepla P."/>
            <person name="Krause E."/>
            <person name="Dallman M.J."/>
            <person name="Magee A.I."/>
            <person name="Tate E.W."/>
        </authorList>
    </citation>
    <scope>MYRISTOYLATION AT GLY-2</scope>
    <scope>CLEAVAGE OF INITIATOR METHIONINE</scope>
    <scope>IDENTIFICATION BY MASS SPECTROMETRY</scope>
</reference>
<reference key="21">
    <citation type="journal article" date="2006" name="Science">
        <title>The consensus coding sequences of human breast and colorectal cancers.</title>
        <authorList>
            <person name="Sjoeblom T."/>
            <person name="Jones S."/>
            <person name="Wood L.D."/>
            <person name="Parsons D.W."/>
            <person name="Lin J."/>
            <person name="Barber T.D."/>
            <person name="Mandelker D."/>
            <person name="Leary R.J."/>
            <person name="Ptak J."/>
            <person name="Silliman N."/>
            <person name="Szabo S."/>
            <person name="Buckhaults P."/>
            <person name="Farrell C."/>
            <person name="Meeh P."/>
            <person name="Markowitz S.D."/>
            <person name="Willis J."/>
            <person name="Dawson D."/>
            <person name="Willson J.K.V."/>
            <person name="Gazdar A.F."/>
            <person name="Hartigan J."/>
            <person name="Wu L."/>
            <person name="Liu C."/>
            <person name="Parmigiani G."/>
            <person name="Park B.H."/>
            <person name="Bachman K.E."/>
            <person name="Papadopoulos N."/>
            <person name="Vogelstein B."/>
            <person name="Kinzler K.W."/>
            <person name="Velculescu V.E."/>
        </authorList>
    </citation>
    <scope>VARIANT [LARGE SCALE ANALYSIS] LYS-240</scope>
</reference>